<accession>B9KPF7</accession>
<name>GATC_CERSK</name>
<evidence type="ECO:0000255" key="1">
    <source>
        <dbReference type="HAMAP-Rule" id="MF_00122"/>
    </source>
</evidence>
<proteinExistence type="inferred from homology"/>
<comment type="function">
    <text evidence="1">Allows the formation of correctly charged Asn-tRNA(Asn) or Gln-tRNA(Gln) through the transamidation of misacylated Asp-tRNA(Asn) or Glu-tRNA(Gln) in organisms which lack either or both of asparaginyl-tRNA or glutaminyl-tRNA synthetases. The reaction takes place in the presence of glutamine and ATP through an activated phospho-Asp-tRNA(Asn) or phospho-Glu-tRNA(Gln).</text>
</comment>
<comment type="catalytic activity">
    <reaction evidence="1">
        <text>L-glutamyl-tRNA(Gln) + L-glutamine + ATP + H2O = L-glutaminyl-tRNA(Gln) + L-glutamate + ADP + phosphate + H(+)</text>
        <dbReference type="Rhea" id="RHEA:17521"/>
        <dbReference type="Rhea" id="RHEA-COMP:9681"/>
        <dbReference type="Rhea" id="RHEA-COMP:9684"/>
        <dbReference type="ChEBI" id="CHEBI:15377"/>
        <dbReference type="ChEBI" id="CHEBI:15378"/>
        <dbReference type="ChEBI" id="CHEBI:29985"/>
        <dbReference type="ChEBI" id="CHEBI:30616"/>
        <dbReference type="ChEBI" id="CHEBI:43474"/>
        <dbReference type="ChEBI" id="CHEBI:58359"/>
        <dbReference type="ChEBI" id="CHEBI:78520"/>
        <dbReference type="ChEBI" id="CHEBI:78521"/>
        <dbReference type="ChEBI" id="CHEBI:456216"/>
    </reaction>
</comment>
<comment type="catalytic activity">
    <reaction evidence="1">
        <text>L-aspartyl-tRNA(Asn) + L-glutamine + ATP + H2O = L-asparaginyl-tRNA(Asn) + L-glutamate + ADP + phosphate + 2 H(+)</text>
        <dbReference type="Rhea" id="RHEA:14513"/>
        <dbReference type="Rhea" id="RHEA-COMP:9674"/>
        <dbReference type="Rhea" id="RHEA-COMP:9677"/>
        <dbReference type="ChEBI" id="CHEBI:15377"/>
        <dbReference type="ChEBI" id="CHEBI:15378"/>
        <dbReference type="ChEBI" id="CHEBI:29985"/>
        <dbReference type="ChEBI" id="CHEBI:30616"/>
        <dbReference type="ChEBI" id="CHEBI:43474"/>
        <dbReference type="ChEBI" id="CHEBI:58359"/>
        <dbReference type="ChEBI" id="CHEBI:78515"/>
        <dbReference type="ChEBI" id="CHEBI:78516"/>
        <dbReference type="ChEBI" id="CHEBI:456216"/>
    </reaction>
</comment>
<comment type="subunit">
    <text evidence="1">Heterotrimer of A, B and C subunits.</text>
</comment>
<comment type="similarity">
    <text evidence="1">Belongs to the GatC family.</text>
</comment>
<protein>
    <recommendedName>
        <fullName evidence="1">Aspartyl/glutamyl-tRNA(Asn/Gln) amidotransferase subunit C</fullName>
        <shortName evidence="1">Asp/Glu-ADT subunit C</shortName>
        <ecNumber evidence="1">6.3.5.-</ecNumber>
    </recommendedName>
</protein>
<sequence>MSIDIETARRVAHLARIRVDEADLPALAGELSGILTFMEQLNEVDVEGIEPMTSVTPMRLKRRQDVVTDGDMQDKVLSNAPDAREGFFAVPKVVE</sequence>
<reference key="1">
    <citation type="journal article" date="2009" name="J. Bacteriol.">
        <title>Complete genome sequence of Rhodobacter sphaeroides KD131.</title>
        <authorList>
            <person name="Lim S.-K."/>
            <person name="Kim S.J."/>
            <person name="Cha S.H."/>
            <person name="Oh Y.-K."/>
            <person name="Rhee H.-J."/>
            <person name="Kim M.-S."/>
            <person name="Lee J.K."/>
        </authorList>
    </citation>
    <scope>NUCLEOTIDE SEQUENCE [LARGE SCALE GENOMIC DNA]</scope>
    <source>
        <strain>KD131 / KCTC 12085</strain>
    </source>
</reference>
<keyword id="KW-0067">ATP-binding</keyword>
<keyword id="KW-0436">Ligase</keyword>
<keyword id="KW-0547">Nucleotide-binding</keyword>
<keyword id="KW-0648">Protein biosynthesis</keyword>
<dbReference type="EC" id="6.3.5.-" evidence="1"/>
<dbReference type="EMBL" id="CP001150">
    <property type="protein sequence ID" value="ACM00450.1"/>
    <property type="molecule type" value="Genomic_DNA"/>
</dbReference>
<dbReference type="RefSeq" id="WP_002719430.1">
    <property type="nucleotide sequence ID" value="NC_011963.1"/>
</dbReference>
<dbReference type="SMR" id="B9KPF7"/>
<dbReference type="GeneID" id="67446042"/>
<dbReference type="KEGG" id="rsk:RSKD131_0590"/>
<dbReference type="HOGENOM" id="CLU_105899_2_0_5"/>
<dbReference type="GO" id="GO:0050566">
    <property type="term" value="F:asparaginyl-tRNA synthase (glutamine-hydrolyzing) activity"/>
    <property type="evidence" value="ECO:0007669"/>
    <property type="project" value="RHEA"/>
</dbReference>
<dbReference type="GO" id="GO:0005524">
    <property type="term" value="F:ATP binding"/>
    <property type="evidence" value="ECO:0007669"/>
    <property type="project" value="UniProtKB-KW"/>
</dbReference>
<dbReference type="GO" id="GO:0050567">
    <property type="term" value="F:glutaminyl-tRNA synthase (glutamine-hydrolyzing) activity"/>
    <property type="evidence" value="ECO:0007669"/>
    <property type="project" value="UniProtKB-UniRule"/>
</dbReference>
<dbReference type="GO" id="GO:0070681">
    <property type="term" value="P:glutaminyl-tRNAGln biosynthesis via transamidation"/>
    <property type="evidence" value="ECO:0007669"/>
    <property type="project" value="TreeGrafter"/>
</dbReference>
<dbReference type="GO" id="GO:0006450">
    <property type="term" value="P:regulation of translational fidelity"/>
    <property type="evidence" value="ECO:0007669"/>
    <property type="project" value="InterPro"/>
</dbReference>
<dbReference type="GO" id="GO:0006412">
    <property type="term" value="P:translation"/>
    <property type="evidence" value="ECO:0007669"/>
    <property type="project" value="UniProtKB-UniRule"/>
</dbReference>
<dbReference type="Gene3D" id="1.10.20.60">
    <property type="entry name" value="Glu-tRNAGln amidotransferase C subunit, N-terminal domain"/>
    <property type="match status" value="1"/>
</dbReference>
<dbReference type="HAMAP" id="MF_00122">
    <property type="entry name" value="GatC"/>
    <property type="match status" value="1"/>
</dbReference>
<dbReference type="InterPro" id="IPR036113">
    <property type="entry name" value="Asp/Glu-ADT_sf_sub_c"/>
</dbReference>
<dbReference type="InterPro" id="IPR003837">
    <property type="entry name" value="GatC"/>
</dbReference>
<dbReference type="NCBIfam" id="TIGR00135">
    <property type="entry name" value="gatC"/>
    <property type="match status" value="1"/>
</dbReference>
<dbReference type="PANTHER" id="PTHR15004">
    <property type="entry name" value="GLUTAMYL-TRNA(GLN) AMIDOTRANSFERASE SUBUNIT C, MITOCHONDRIAL"/>
    <property type="match status" value="1"/>
</dbReference>
<dbReference type="PANTHER" id="PTHR15004:SF0">
    <property type="entry name" value="GLUTAMYL-TRNA(GLN) AMIDOTRANSFERASE SUBUNIT C, MITOCHONDRIAL"/>
    <property type="match status" value="1"/>
</dbReference>
<dbReference type="Pfam" id="PF02686">
    <property type="entry name" value="GatC"/>
    <property type="match status" value="1"/>
</dbReference>
<dbReference type="SUPFAM" id="SSF141000">
    <property type="entry name" value="Glu-tRNAGln amidotransferase C subunit"/>
    <property type="match status" value="1"/>
</dbReference>
<organism>
    <name type="scientific">Cereibacter sphaeroides (strain KD131 / KCTC 12085)</name>
    <name type="common">Rhodobacter sphaeroides</name>
    <dbReference type="NCBI Taxonomy" id="557760"/>
    <lineage>
        <taxon>Bacteria</taxon>
        <taxon>Pseudomonadati</taxon>
        <taxon>Pseudomonadota</taxon>
        <taxon>Alphaproteobacteria</taxon>
        <taxon>Rhodobacterales</taxon>
        <taxon>Paracoccaceae</taxon>
        <taxon>Cereibacter</taxon>
    </lineage>
</organism>
<gene>
    <name evidence="1" type="primary">gatC</name>
    <name type="ordered locus">RSKD131_0590</name>
</gene>
<feature type="chain" id="PRO_1000122581" description="Aspartyl/glutamyl-tRNA(Asn/Gln) amidotransferase subunit C">
    <location>
        <begin position="1"/>
        <end position="95"/>
    </location>
</feature>